<comment type="function">
    <text evidence="2">Catalyzes the reversible transfer of the terminal phosphate group between ATP and AMP. Plays an important role in cellular energy homeostasis and in adenine nucleotide metabolism. Adenylate kinase activity is critical for regulation of the phosphate utilization and the AMP de novo biosynthesis pathways.</text>
</comment>
<comment type="catalytic activity">
    <reaction evidence="2">
        <text>AMP + ATP = 2 ADP</text>
        <dbReference type="Rhea" id="RHEA:12973"/>
        <dbReference type="ChEBI" id="CHEBI:30616"/>
        <dbReference type="ChEBI" id="CHEBI:456215"/>
        <dbReference type="ChEBI" id="CHEBI:456216"/>
        <dbReference type="EC" id="2.7.4.3"/>
    </reaction>
</comment>
<comment type="subunit">
    <text evidence="2">Monomer.</text>
</comment>
<comment type="subcellular location">
    <subcellularLocation>
        <location evidence="2">Cytoplasm</location>
        <location evidence="2">Cytosol</location>
    </subcellularLocation>
    <subcellularLocation>
        <location evidence="2">Mitochondrion intermembrane space</location>
    </subcellularLocation>
    <text evidence="2">Predominantly mitochondrial.</text>
</comment>
<comment type="domain">
    <text evidence="2">Consists of three domains, a large central CORE domain and two small peripheral domains, NMPbind and LID, which undergo movements during catalysis. The LID domain closes over the site of phosphoryl transfer upon ATP binding. Assembling and dissambling the active center during each catalytic cycle provides an effective means to prevent ATP hydrolysis.</text>
</comment>
<comment type="similarity">
    <text evidence="2">Belongs to the adenylate kinase family. AK2 subfamily.</text>
</comment>
<keyword id="KW-0067">ATP-binding</keyword>
<keyword id="KW-0963">Cytoplasm</keyword>
<keyword id="KW-0418">Kinase</keyword>
<keyword id="KW-0496">Mitochondrion</keyword>
<keyword id="KW-0547">Nucleotide-binding</keyword>
<keyword id="KW-0597">Phosphoprotein</keyword>
<keyword id="KW-1185">Reference proteome</keyword>
<keyword id="KW-0808">Transferase</keyword>
<reference key="1">
    <citation type="journal article" date="2007" name="Nature">
        <title>Evolution of genes and genomes on the Drosophila phylogeny.</title>
        <authorList>
            <consortium name="Drosophila 12 genomes consortium"/>
        </authorList>
    </citation>
    <scope>NUCLEOTIDE SEQUENCE [LARGE SCALE GENOMIC DNA]</scope>
    <source>
        <strain>Tucson 15287-2541.00</strain>
    </source>
</reference>
<accession>B4J672</accession>
<gene>
    <name evidence="2" type="primary">Adk2</name>
    <name type="ORF">GH21708</name>
</gene>
<sequence length="238" mass="26295">MAPNAARPVERYESNNHGVNAILLGPPGSGKGTQAPLLKEKFCVCHLSTGDMLRAEIASGSKLGSDLKKVMDAGKLVSDDLVVDMIDSNLDKPECKNGFLLDGFPRTVVQAEKLDTLLDKRKTHLDAVIEFAIDDNLLVRRITGRLIHQASGRSYHEEFAPPKVPMKDDITGELLMRRSDDNAEALKKRLESYHKQTKPLVDYYGLRGLHFKVDAAKKASDVFSSIDSIFLRKAHANA</sequence>
<name>KAD2_DROGR</name>
<proteinExistence type="inferred from homology"/>
<organism>
    <name type="scientific">Drosophila grimshawi</name>
    <name type="common">Hawaiian fruit fly</name>
    <name type="synonym">Idiomyia grimshawi</name>
    <dbReference type="NCBI Taxonomy" id="7222"/>
    <lineage>
        <taxon>Eukaryota</taxon>
        <taxon>Metazoa</taxon>
        <taxon>Ecdysozoa</taxon>
        <taxon>Arthropoda</taxon>
        <taxon>Hexapoda</taxon>
        <taxon>Insecta</taxon>
        <taxon>Pterygota</taxon>
        <taxon>Neoptera</taxon>
        <taxon>Endopterygota</taxon>
        <taxon>Diptera</taxon>
        <taxon>Brachycera</taxon>
        <taxon>Muscomorpha</taxon>
        <taxon>Ephydroidea</taxon>
        <taxon>Drosophilidae</taxon>
        <taxon>Drosophila</taxon>
        <taxon>Hawaiian Drosophila</taxon>
    </lineage>
</organism>
<protein>
    <recommendedName>
        <fullName evidence="2">Adenylate kinase</fullName>
        <ecNumber evidence="2">2.7.4.3</ecNumber>
    </recommendedName>
    <alternativeName>
        <fullName evidence="2">ATP-AMP transphosphorylase</fullName>
    </alternativeName>
    <alternativeName>
        <fullName evidence="2">ATP:AMP phosphotransferase</fullName>
    </alternativeName>
    <alternativeName>
        <fullName evidence="2">Adenylate kinase cytosolic and mitochondrial</fullName>
    </alternativeName>
    <alternativeName>
        <fullName evidence="2">Adenylate monophosphate kinase</fullName>
    </alternativeName>
</protein>
<dbReference type="EC" id="2.7.4.3" evidence="2"/>
<dbReference type="EMBL" id="CH916367">
    <property type="protein sequence ID" value="EDW01930.1"/>
    <property type="molecule type" value="Genomic_DNA"/>
</dbReference>
<dbReference type="SMR" id="B4J672"/>
<dbReference type="FunCoup" id="B4J672">
    <property type="interactions" value="1618"/>
</dbReference>
<dbReference type="STRING" id="7222.B4J672"/>
<dbReference type="EnsemblMetazoa" id="FBtr0157122">
    <property type="protein sequence ID" value="FBpp0155614"/>
    <property type="gene ID" value="FBgn0129169"/>
</dbReference>
<dbReference type="EnsemblMetazoa" id="XM_001987027.2">
    <property type="protein sequence ID" value="XP_001987063.1"/>
    <property type="gene ID" value="LOC6559468"/>
</dbReference>
<dbReference type="GeneID" id="6559468"/>
<dbReference type="KEGG" id="dgr:6559468"/>
<dbReference type="CTD" id="204"/>
<dbReference type="eggNOG" id="KOG3078">
    <property type="taxonomic scope" value="Eukaryota"/>
</dbReference>
<dbReference type="HOGENOM" id="CLU_032354_1_0_1"/>
<dbReference type="InParanoid" id="B4J672"/>
<dbReference type="OMA" id="HYKVDAA"/>
<dbReference type="OrthoDB" id="439792at2759"/>
<dbReference type="PhylomeDB" id="B4J672"/>
<dbReference type="Proteomes" id="UP000001070">
    <property type="component" value="Unassembled WGS sequence"/>
</dbReference>
<dbReference type="GO" id="GO:0005829">
    <property type="term" value="C:cytosol"/>
    <property type="evidence" value="ECO:0007669"/>
    <property type="project" value="UniProtKB-SubCell"/>
</dbReference>
<dbReference type="GO" id="GO:0005758">
    <property type="term" value="C:mitochondrial intermembrane space"/>
    <property type="evidence" value="ECO:0007669"/>
    <property type="project" value="UniProtKB-SubCell"/>
</dbReference>
<dbReference type="GO" id="GO:0004017">
    <property type="term" value="F:adenylate kinase activity"/>
    <property type="evidence" value="ECO:0007669"/>
    <property type="project" value="UniProtKB-UniRule"/>
</dbReference>
<dbReference type="GO" id="GO:0005524">
    <property type="term" value="F:ATP binding"/>
    <property type="evidence" value="ECO:0007669"/>
    <property type="project" value="UniProtKB-KW"/>
</dbReference>
<dbReference type="GO" id="GO:0006172">
    <property type="term" value="P:ADP biosynthetic process"/>
    <property type="evidence" value="ECO:0007669"/>
    <property type="project" value="UniProtKB-UniRule"/>
</dbReference>
<dbReference type="GO" id="GO:0046033">
    <property type="term" value="P:AMP metabolic process"/>
    <property type="evidence" value="ECO:0007669"/>
    <property type="project" value="UniProtKB-UniRule"/>
</dbReference>
<dbReference type="GO" id="GO:0046034">
    <property type="term" value="P:ATP metabolic process"/>
    <property type="evidence" value="ECO:0007669"/>
    <property type="project" value="UniProtKB-UniRule"/>
</dbReference>
<dbReference type="CDD" id="cd01428">
    <property type="entry name" value="ADK"/>
    <property type="match status" value="1"/>
</dbReference>
<dbReference type="FunFam" id="3.40.50.300:FF:000106">
    <property type="entry name" value="Adenylate kinase mitochondrial"/>
    <property type="match status" value="1"/>
</dbReference>
<dbReference type="Gene3D" id="3.40.50.300">
    <property type="entry name" value="P-loop containing nucleotide triphosphate hydrolases"/>
    <property type="match status" value="1"/>
</dbReference>
<dbReference type="HAMAP" id="MF_00235">
    <property type="entry name" value="Adenylate_kinase_Adk"/>
    <property type="match status" value="1"/>
</dbReference>
<dbReference type="HAMAP" id="MF_03168">
    <property type="entry name" value="Adenylate_kinase_AK2"/>
    <property type="match status" value="1"/>
</dbReference>
<dbReference type="InterPro" id="IPR006259">
    <property type="entry name" value="Adenyl_kin_sub"/>
</dbReference>
<dbReference type="InterPro" id="IPR000850">
    <property type="entry name" value="Adenylat/UMP-CMP_kin"/>
</dbReference>
<dbReference type="InterPro" id="IPR033690">
    <property type="entry name" value="Adenylat_kinase_CS"/>
</dbReference>
<dbReference type="InterPro" id="IPR007862">
    <property type="entry name" value="Adenylate_kinase_lid-dom"/>
</dbReference>
<dbReference type="InterPro" id="IPR028587">
    <property type="entry name" value="AK2"/>
</dbReference>
<dbReference type="InterPro" id="IPR027417">
    <property type="entry name" value="P-loop_NTPase"/>
</dbReference>
<dbReference type="NCBIfam" id="TIGR01351">
    <property type="entry name" value="adk"/>
    <property type="match status" value="1"/>
</dbReference>
<dbReference type="NCBIfam" id="NF001381">
    <property type="entry name" value="PRK00279.1-3"/>
    <property type="match status" value="1"/>
</dbReference>
<dbReference type="NCBIfam" id="NF011100">
    <property type="entry name" value="PRK14527.1"/>
    <property type="match status" value="1"/>
</dbReference>
<dbReference type="PANTHER" id="PTHR23359">
    <property type="entry name" value="NUCLEOTIDE KINASE"/>
    <property type="match status" value="1"/>
</dbReference>
<dbReference type="Pfam" id="PF00406">
    <property type="entry name" value="ADK"/>
    <property type="match status" value="1"/>
</dbReference>
<dbReference type="Pfam" id="PF05191">
    <property type="entry name" value="ADK_lid"/>
    <property type="match status" value="1"/>
</dbReference>
<dbReference type="PRINTS" id="PR00094">
    <property type="entry name" value="ADENYLTKNASE"/>
</dbReference>
<dbReference type="SUPFAM" id="SSF52540">
    <property type="entry name" value="P-loop containing nucleoside triphosphate hydrolases"/>
    <property type="match status" value="1"/>
</dbReference>
<dbReference type="PROSITE" id="PS00113">
    <property type="entry name" value="ADENYLATE_KINASE"/>
    <property type="match status" value="1"/>
</dbReference>
<evidence type="ECO:0000250" key="1"/>
<evidence type="ECO:0000255" key="2">
    <source>
        <dbReference type="HAMAP-Rule" id="MF_03168"/>
    </source>
</evidence>
<feature type="chain" id="PRO_0000365705" description="Adenylate kinase">
    <location>
        <begin position="1"/>
        <end position="238"/>
    </location>
</feature>
<feature type="region of interest" description="NMP" evidence="2">
    <location>
        <begin position="48"/>
        <end position="77"/>
    </location>
</feature>
<feature type="region of interest" description="LID" evidence="2">
    <location>
        <begin position="144"/>
        <end position="181"/>
    </location>
</feature>
<feature type="binding site" evidence="2">
    <location>
        <begin position="28"/>
        <end position="33"/>
    </location>
    <ligand>
        <name>ATP</name>
        <dbReference type="ChEBI" id="CHEBI:30616"/>
    </ligand>
</feature>
<feature type="binding site" evidence="2">
    <location>
        <position position="49"/>
    </location>
    <ligand>
        <name>AMP</name>
        <dbReference type="ChEBI" id="CHEBI:456215"/>
    </ligand>
</feature>
<feature type="binding site" evidence="2">
    <location>
        <position position="54"/>
    </location>
    <ligand>
        <name>AMP</name>
        <dbReference type="ChEBI" id="CHEBI:456215"/>
    </ligand>
</feature>
<feature type="binding site" evidence="2">
    <location>
        <begin position="75"/>
        <end position="77"/>
    </location>
    <ligand>
        <name>AMP</name>
        <dbReference type="ChEBI" id="CHEBI:456215"/>
    </ligand>
</feature>
<feature type="binding site" evidence="2">
    <location>
        <begin position="103"/>
        <end position="106"/>
    </location>
    <ligand>
        <name>AMP</name>
        <dbReference type="ChEBI" id="CHEBI:456215"/>
    </ligand>
</feature>
<feature type="binding site" evidence="2">
    <location>
        <position position="110"/>
    </location>
    <ligand>
        <name>AMP</name>
        <dbReference type="ChEBI" id="CHEBI:456215"/>
    </ligand>
</feature>
<feature type="binding site" evidence="2">
    <location>
        <position position="145"/>
    </location>
    <ligand>
        <name>ATP</name>
        <dbReference type="ChEBI" id="CHEBI:30616"/>
    </ligand>
</feature>
<feature type="binding site" evidence="2">
    <location>
        <begin position="154"/>
        <end position="155"/>
    </location>
    <ligand>
        <name>ATP</name>
        <dbReference type="ChEBI" id="CHEBI:30616"/>
    </ligand>
</feature>
<feature type="binding site" evidence="2">
    <location>
        <position position="178"/>
    </location>
    <ligand>
        <name>AMP</name>
        <dbReference type="ChEBI" id="CHEBI:456215"/>
    </ligand>
</feature>
<feature type="binding site" evidence="2">
    <location>
        <position position="189"/>
    </location>
    <ligand>
        <name>AMP</name>
        <dbReference type="ChEBI" id="CHEBI:456215"/>
    </ligand>
</feature>
<feature type="binding site" evidence="2">
    <location>
        <position position="217"/>
    </location>
    <ligand>
        <name>ATP</name>
        <dbReference type="ChEBI" id="CHEBI:30616"/>
    </ligand>
</feature>
<feature type="modified residue" description="Phosphoserine" evidence="1">
    <location>
        <position position="48"/>
    </location>
</feature>